<feature type="chain" id="PRO_1000007836" description="4-diphosphocytidyl-2-C-methyl-D-erythritol kinase">
    <location>
        <begin position="1"/>
        <end position="288"/>
    </location>
</feature>
<feature type="active site" evidence="1">
    <location>
        <position position="8"/>
    </location>
</feature>
<feature type="active site" evidence="1">
    <location>
        <position position="134"/>
    </location>
</feature>
<feature type="binding site" evidence="1">
    <location>
        <begin position="92"/>
        <end position="102"/>
    </location>
    <ligand>
        <name>ATP</name>
        <dbReference type="ChEBI" id="CHEBI:30616"/>
    </ligand>
</feature>
<sequence>MKMKAYAKINIALDAIGKREDNYHLLRMIMQTVDLYDVIDIEKSNDSNISISCNKHYVPTDERNLAYKAAVLFRDEFNIKDGVKINIKKNIPVAAGMAGGSTNAAAVLVIMNKLFNVNASLEVLKEIGLKIGADVPYCIEGGTALCEGIGEIITPLKPFENKILVVLKPNFGVSTKEVYTNLDINKIRKHVNIEGLIQAMENDDLDYVSKNMKNVLENVTLKKHTILKNIKEDMRKSGALGAMMSGSGPTVFAFFDDMLTAQRAFEFLKGKYKYSDVYITRTINSNNL</sequence>
<protein>
    <recommendedName>
        <fullName evidence="1">4-diphosphocytidyl-2-C-methyl-D-erythritol kinase</fullName>
        <shortName evidence="1">CMK</shortName>
        <ecNumber evidence="1">2.7.1.148</ecNumber>
    </recommendedName>
    <alternativeName>
        <fullName evidence="1">4-(cytidine-5'-diphospho)-2-C-methyl-D-erythritol kinase</fullName>
    </alternativeName>
</protein>
<keyword id="KW-0067">ATP-binding</keyword>
<keyword id="KW-0414">Isoprene biosynthesis</keyword>
<keyword id="KW-0418">Kinase</keyword>
<keyword id="KW-0547">Nucleotide-binding</keyword>
<keyword id="KW-0808">Transferase</keyword>
<dbReference type="EC" id="2.7.1.148" evidence="1"/>
<dbReference type="EMBL" id="CP000246">
    <property type="protein sequence ID" value="ABG83909.1"/>
    <property type="molecule type" value="Genomic_DNA"/>
</dbReference>
<dbReference type="RefSeq" id="WP_003471015.1">
    <property type="nucleotide sequence ID" value="NC_008261.1"/>
</dbReference>
<dbReference type="SMR" id="Q0TNA0"/>
<dbReference type="STRING" id="195103.CPF_2476"/>
<dbReference type="PaxDb" id="195103-CPF_2476"/>
<dbReference type="GeneID" id="93001246"/>
<dbReference type="KEGG" id="cpf:CPF_2476"/>
<dbReference type="eggNOG" id="COG1947">
    <property type="taxonomic scope" value="Bacteria"/>
</dbReference>
<dbReference type="HOGENOM" id="CLU_053057_1_1_9"/>
<dbReference type="UniPathway" id="UPA00056">
    <property type="reaction ID" value="UER00094"/>
</dbReference>
<dbReference type="Proteomes" id="UP000001823">
    <property type="component" value="Chromosome"/>
</dbReference>
<dbReference type="GO" id="GO:0050515">
    <property type="term" value="F:4-(cytidine 5'-diphospho)-2-C-methyl-D-erythritol kinase activity"/>
    <property type="evidence" value="ECO:0007669"/>
    <property type="project" value="UniProtKB-UniRule"/>
</dbReference>
<dbReference type="GO" id="GO:0005524">
    <property type="term" value="F:ATP binding"/>
    <property type="evidence" value="ECO:0007669"/>
    <property type="project" value="UniProtKB-UniRule"/>
</dbReference>
<dbReference type="GO" id="GO:0019288">
    <property type="term" value="P:isopentenyl diphosphate biosynthetic process, methylerythritol 4-phosphate pathway"/>
    <property type="evidence" value="ECO:0007669"/>
    <property type="project" value="UniProtKB-UniRule"/>
</dbReference>
<dbReference type="GO" id="GO:0016114">
    <property type="term" value="P:terpenoid biosynthetic process"/>
    <property type="evidence" value="ECO:0007669"/>
    <property type="project" value="InterPro"/>
</dbReference>
<dbReference type="FunFam" id="3.30.230.10:FF:000029">
    <property type="entry name" value="4-diphosphocytidyl-2-C-methyl-D-erythritol kinase"/>
    <property type="match status" value="1"/>
</dbReference>
<dbReference type="Gene3D" id="3.30.230.10">
    <property type="match status" value="1"/>
</dbReference>
<dbReference type="Gene3D" id="3.30.70.890">
    <property type="entry name" value="GHMP kinase, C-terminal domain"/>
    <property type="match status" value="1"/>
</dbReference>
<dbReference type="HAMAP" id="MF_00061">
    <property type="entry name" value="IspE"/>
    <property type="match status" value="1"/>
</dbReference>
<dbReference type="InterPro" id="IPR013750">
    <property type="entry name" value="GHMP_kinase_C_dom"/>
</dbReference>
<dbReference type="InterPro" id="IPR036554">
    <property type="entry name" value="GHMP_kinase_C_sf"/>
</dbReference>
<dbReference type="InterPro" id="IPR006204">
    <property type="entry name" value="GHMP_kinase_N_dom"/>
</dbReference>
<dbReference type="InterPro" id="IPR004424">
    <property type="entry name" value="IspE"/>
</dbReference>
<dbReference type="InterPro" id="IPR020568">
    <property type="entry name" value="Ribosomal_Su5_D2-typ_SF"/>
</dbReference>
<dbReference type="InterPro" id="IPR014721">
    <property type="entry name" value="Ribsml_uS5_D2-typ_fold_subgr"/>
</dbReference>
<dbReference type="NCBIfam" id="TIGR00154">
    <property type="entry name" value="ispE"/>
    <property type="match status" value="1"/>
</dbReference>
<dbReference type="PANTHER" id="PTHR43527">
    <property type="entry name" value="4-DIPHOSPHOCYTIDYL-2-C-METHYL-D-ERYTHRITOL KINASE, CHLOROPLASTIC"/>
    <property type="match status" value="1"/>
</dbReference>
<dbReference type="PANTHER" id="PTHR43527:SF2">
    <property type="entry name" value="4-DIPHOSPHOCYTIDYL-2-C-METHYL-D-ERYTHRITOL KINASE, CHLOROPLASTIC"/>
    <property type="match status" value="1"/>
</dbReference>
<dbReference type="Pfam" id="PF08544">
    <property type="entry name" value="GHMP_kinases_C"/>
    <property type="match status" value="1"/>
</dbReference>
<dbReference type="Pfam" id="PF00288">
    <property type="entry name" value="GHMP_kinases_N"/>
    <property type="match status" value="1"/>
</dbReference>
<dbReference type="PIRSF" id="PIRSF010376">
    <property type="entry name" value="IspE"/>
    <property type="match status" value="1"/>
</dbReference>
<dbReference type="SUPFAM" id="SSF55060">
    <property type="entry name" value="GHMP Kinase, C-terminal domain"/>
    <property type="match status" value="1"/>
</dbReference>
<dbReference type="SUPFAM" id="SSF54211">
    <property type="entry name" value="Ribosomal protein S5 domain 2-like"/>
    <property type="match status" value="1"/>
</dbReference>
<comment type="function">
    <text evidence="1">Catalyzes the phosphorylation of the position 2 hydroxy group of 4-diphosphocytidyl-2C-methyl-D-erythritol.</text>
</comment>
<comment type="catalytic activity">
    <reaction evidence="1">
        <text>4-CDP-2-C-methyl-D-erythritol + ATP = 4-CDP-2-C-methyl-D-erythritol 2-phosphate + ADP + H(+)</text>
        <dbReference type="Rhea" id="RHEA:18437"/>
        <dbReference type="ChEBI" id="CHEBI:15378"/>
        <dbReference type="ChEBI" id="CHEBI:30616"/>
        <dbReference type="ChEBI" id="CHEBI:57823"/>
        <dbReference type="ChEBI" id="CHEBI:57919"/>
        <dbReference type="ChEBI" id="CHEBI:456216"/>
        <dbReference type="EC" id="2.7.1.148"/>
    </reaction>
</comment>
<comment type="pathway">
    <text evidence="1">Isoprenoid biosynthesis; isopentenyl diphosphate biosynthesis via DXP pathway; isopentenyl diphosphate from 1-deoxy-D-xylulose 5-phosphate: step 3/6.</text>
</comment>
<comment type="similarity">
    <text evidence="1">Belongs to the GHMP kinase family. IspE subfamily.</text>
</comment>
<organism>
    <name type="scientific">Clostridium perfringens (strain ATCC 13124 / DSM 756 / JCM 1290 / NCIMB 6125 / NCTC 8237 / Type A)</name>
    <dbReference type="NCBI Taxonomy" id="195103"/>
    <lineage>
        <taxon>Bacteria</taxon>
        <taxon>Bacillati</taxon>
        <taxon>Bacillota</taxon>
        <taxon>Clostridia</taxon>
        <taxon>Eubacteriales</taxon>
        <taxon>Clostridiaceae</taxon>
        <taxon>Clostridium</taxon>
    </lineage>
</organism>
<proteinExistence type="inferred from homology"/>
<reference key="1">
    <citation type="journal article" date="2006" name="Genome Res.">
        <title>Skewed genomic variability in strains of the toxigenic bacterial pathogen, Clostridium perfringens.</title>
        <authorList>
            <person name="Myers G.S.A."/>
            <person name="Rasko D.A."/>
            <person name="Cheung J.K."/>
            <person name="Ravel J."/>
            <person name="Seshadri R."/>
            <person name="DeBoy R.T."/>
            <person name="Ren Q."/>
            <person name="Varga J."/>
            <person name="Awad M.M."/>
            <person name="Brinkac L.M."/>
            <person name="Daugherty S.C."/>
            <person name="Haft D.H."/>
            <person name="Dodson R.J."/>
            <person name="Madupu R."/>
            <person name="Nelson W.C."/>
            <person name="Rosovitz M.J."/>
            <person name="Sullivan S.A."/>
            <person name="Khouri H."/>
            <person name="Dimitrov G.I."/>
            <person name="Watkins K.L."/>
            <person name="Mulligan S."/>
            <person name="Benton J."/>
            <person name="Radune D."/>
            <person name="Fisher D.J."/>
            <person name="Atkins H.S."/>
            <person name="Hiscox T."/>
            <person name="Jost B.H."/>
            <person name="Billington S.J."/>
            <person name="Songer J.G."/>
            <person name="McClane B.A."/>
            <person name="Titball R.W."/>
            <person name="Rood J.I."/>
            <person name="Melville S.B."/>
            <person name="Paulsen I.T."/>
        </authorList>
    </citation>
    <scope>NUCLEOTIDE SEQUENCE [LARGE SCALE GENOMIC DNA]</scope>
    <source>
        <strain>ATCC 13124 / DSM 756 / JCM 1290 / NCIMB 6125 / NCTC 8237 / S 107 / Type A</strain>
    </source>
</reference>
<name>ISPE_CLOP1</name>
<gene>
    <name evidence="1" type="primary">ispE</name>
    <name type="ordered locus">CPF_2476</name>
</gene>
<evidence type="ECO:0000255" key="1">
    <source>
        <dbReference type="HAMAP-Rule" id="MF_00061"/>
    </source>
</evidence>
<accession>Q0TNA0</accession>